<comment type="function">
    <text evidence="5">Recruiter that couples transcriptional factors to general transcription apparatus and thereby modulates transcription regulation and chromatin formation. Can both act as an activator or a repressor depending on the context. Mediates MBD1-dependent transcriptional repression, probably by recruiting complexes containing SETDB1. The complex formed with MBD1 and SETDB1 represses transcription and probably couples DNA methylation and histone H3 'Lys-9' trimethylation (H3K9me3) activity (Probable).</text>
</comment>
<comment type="subunit">
    <text>Interacts with MBD1, SETDB1 and SP1. Probably forms a complex with SETDB1 and MBD1.</text>
</comment>
<comment type="subcellular location">
    <subcellularLocation>
        <location>Nucleus</location>
    </subcellularLocation>
</comment>
<comment type="alternative products">
    <event type="alternative splicing"/>
    <isoform>
        <id>Q5U623-1</id>
        <name>1</name>
        <sequence type="displayed"/>
    </isoform>
    <isoform>
        <id>Q5U623-2</id>
        <name>2</name>
        <sequence type="described" ref="VSP_024042 VSP_024043"/>
    </isoform>
</comment>
<comment type="similarity">
    <text evidence="5">Belongs to the MCAF family.</text>
</comment>
<comment type="sequence caution" evidence="5">
    <conflict type="erroneous initiation">
        <sequence resource="EMBL-CDS" id="BAB14209"/>
    </conflict>
</comment>
<name>MCAF2_HUMAN</name>
<keyword id="KW-0010">Activator</keyword>
<keyword id="KW-0025">Alternative splicing</keyword>
<keyword id="KW-0175">Coiled coil</keyword>
<keyword id="KW-0539">Nucleus</keyword>
<keyword id="KW-0597">Phosphoprotein</keyword>
<keyword id="KW-1267">Proteomics identification</keyword>
<keyword id="KW-1185">Reference proteome</keyword>
<keyword id="KW-0677">Repeat</keyword>
<keyword id="KW-0678">Repressor</keyword>
<keyword id="KW-0804">Transcription</keyword>
<keyword id="KW-0805">Transcription regulation</keyword>
<feature type="chain" id="PRO_0000281784" description="Activating transcription factor 7-interacting protein 2">
    <location>
        <begin position="1"/>
        <end position="682"/>
    </location>
</feature>
<feature type="domain" description="Fibronectin type-III" evidence="2">
    <location>
        <begin position="575"/>
        <end position="680"/>
    </location>
</feature>
<feature type="region of interest" description="Disordered" evidence="3">
    <location>
        <begin position="120"/>
        <end position="148"/>
    </location>
</feature>
<feature type="region of interest" description="Disordered" evidence="3">
    <location>
        <begin position="418"/>
        <end position="491"/>
    </location>
</feature>
<feature type="region of interest" description="Disordered" evidence="3">
    <location>
        <begin position="513"/>
        <end position="538"/>
    </location>
</feature>
<feature type="coiled-coil region" evidence="1">
    <location>
        <begin position="328"/>
        <end position="378"/>
    </location>
</feature>
<feature type="compositionally biased region" description="Polar residues" evidence="3">
    <location>
        <begin position="137"/>
        <end position="148"/>
    </location>
</feature>
<feature type="compositionally biased region" description="Polar residues" evidence="3">
    <location>
        <begin position="418"/>
        <end position="451"/>
    </location>
</feature>
<feature type="compositionally biased region" description="Polar residues" evidence="3">
    <location>
        <begin position="462"/>
        <end position="490"/>
    </location>
</feature>
<feature type="compositionally biased region" description="Polar residues" evidence="3">
    <location>
        <begin position="528"/>
        <end position="538"/>
    </location>
</feature>
<feature type="modified residue" description="Phosphoserine" evidence="6">
    <location>
        <position position="416"/>
    </location>
</feature>
<feature type="modified residue" description="Phosphoserine" evidence="6">
    <location>
        <position position="488"/>
    </location>
</feature>
<feature type="modified residue" description="Phosphoserine" evidence="6">
    <location>
        <position position="521"/>
    </location>
</feature>
<feature type="splice variant" id="VSP_024042" description="In isoform 2." evidence="4">
    <original>AVQKKLDSIIDLTKEGLSNCNTESPVSPLESHSKAASNSKETTPLAQNA</original>
    <variation>KVQYPPWSHIRKLLQTQRKQPHWHKMQSRFLSPLSTCHLSQNHQHHYLN</variation>
    <location>
        <begin position="495"/>
        <end position="543"/>
    </location>
</feature>
<feature type="splice variant" id="VSP_024043" description="In isoform 2." evidence="4">
    <location>
        <begin position="544"/>
        <end position="682"/>
    </location>
</feature>
<feature type="sequence variant" id="VAR_053872" description="In dbSNP:rs34834862.">
    <original>S</original>
    <variation>L</variation>
    <location>
        <position position="527"/>
    </location>
</feature>
<feature type="sequence variant" id="VAR_031286" description="In dbSNP:rs9932051.">
    <original>T</original>
    <variation>I</variation>
    <location>
        <position position="537"/>
    </location>
</feature>
<feature type="sequence variant" id="VAR_031287" description="In dbSNP:rs9931441.">
    <original>A</original>
    <variation>T</variation>
    <location>
        <position position="543"/>
    </location>
</feature>
<feature type="sequence conflict" description="In Ref. 1; AAT66299 and 3; AAH33891." evidence="5" ref="1 3">
    <location>
        <position position="61"/>
    </location>
</feature>
<feature type="sequence conflict" description="In Ref. 2; BAB14209." evidence="5" ref="2">
    <original>I</original>
    <variation>T</variation>
    <location>
        <position position="470"/>
    </location>
</feature>
<feature type="sequence conflict" description="In Ref. 5; BAD97212." evidence="5" ref="5">
    <original>P</original>
    <variation>L</variation>
    <location>
        <position position="555"/>
    </location>
</feature>
<sequence>MASPDRSKRKILKAKKTMPLSCRKQVEMLNKSRNVEALKTAIGSNVPSGNQSFSPSVITRTTEITKCSPSENGASSLDSNKNSISEKSKVFSQNCIKPVEEIVHSETKLEQVVCSYQKPSRTTESPSRVFTEEAKDSLNTSENDSEHQTNVTRSLFEHEGACSLKSSCCPPSVLSGVVQMPESTVTSTVGDKKTDQMVFHLETNSNSESHDKRQSDNILCSEDSGFVPVEKTPNLVNSVTSNNCADDILKTDECSRTSISNCESADSTWQSSLDTNNNSHYQKKRMFSENEENVKRMKTSEQINENICVSLERQTAFLEQVRHLIQQEIYSINYELFDKKLKELNQRIGKTECRNKHEGIADKLLAKIAKLQRRIKTVLLFQRNCLKPNMLSSNGASKVANSEAMILDKNLESVNSPIEKSSVNYEPSNPSEKGSKKINLSSDQNKSVSESNNDDVMLISVESPNLTTPITSNPTDTRKITSGNSSNSPNAEVMAVQKKLDSIIDLTKEGLSNCNTESPVSPLESHSKAASNSKETTPLAQNAVQVPESFEHLPPLPEPPAPLPELVDKTRDTLPPQKPELKVKRVFRPNGIALTWNITKINPKCAPVESYHLFLCHENSNNKLIWKKIGEIKALPLPMACTLSQFLASNRYYFTVQSKDIFGRYGPFCDIKSIPGFSENLT</sequence>
<dbReference type="EMBL" id="AY560615">
    <property type="protein sequence ID" value="AAT66299.1"/>
    <property type="molecule type" value="mRNA"/>
</dbReference>
<dbReference type="EMBL" id="AK022730">
    <property type="protein sequence ID" value="BAB14209.1"/>
    <property type="status" value="ALT_INIT"/>
    <property type="molecule type" value="mRNA"/>
</dbReference>
<dbReference type="EMBL" id="AK093414">
    <property type="protein sequence ID" value="BAC04157.1"/>
    <property type="molecule type" value="mRNA"/>
</dbReference>
<dbReference type="EMBL" id="BC033891">
    <property type="protein sequence ID" value="AAH33891.1"/>
    <property type="molecule type" value="mRNA"/>
</dbReference>
<dbReference type="EMBL" id="BC069713">
    <property type="protein sequence ID" value="AAH69713.1"/>
    <property type="molecule type" value="mRNA"/>
</dbReference>
<dbReference type="EMBL" id="BC069730">
    <property type="protein sequence ID" value="AAH69730.1"/>
    <property type="molecule type" value="mRNA"/>
</dbReference>
<dbReference type="EMBL" id="BC069695">
    <property type="protein sequence ID" value="AAH69695.1"/>
    <property type="molecule type" value="mRNA"/>
</dbReference>
<dbReference type="EMBL" id="BC137079">
    <property type="protein sequence ID" value="AAI37080.1"/>
    <property type="molecule type" value="mRNA"/>
</dbReference>
<dbReference type="EMBL" id="AL832987">
    <property type="protein sequence ID" value="CAH56323.1"/>
    <property type="molecule type" value="mRNA"/>
</dbReference>
<dbReference type="EMBL" id="AK223492">
    <property type="protein sequence ID" value="BAD97212.1"/>
    <property type="molecule type" value="mRNA"/>
</dbReference>
<dbReference type="CCDS" id="CCDS10540.1">
    <molecule id="Q5U623-1"/>
</dbReference>
<dbReference type="CCDS" id="CCDS58422.1">
    <molecule id="Q5U623-2"/>
</dbReference>
<dbReference type="RefSeq" id="NP_001243089.1">
    <molecule id="Q5U623-2"/>
    <property type="nucleotide sequence ID" value="NM_001256160.3"/>
</dbReference>
<dbReference type="RefSeq" id="NP_001339049.1">
    <molecule id="Q5U623-1"/>
    <property type="nucleotide sequence ID" value="NM_001352120.2"/>
</dbReference>
<dbReference type="RefSeq" id="NP_001380648.1">
    <molecule id="Q5U623-1"/>
    <property type="nucleotide sequence ID" value="NM_001393719.1"/>
</dbReference>
<dbReference type="RefSeq" id="NP_079273.2">
    <molecule id="Q5U623-1"/>
    <property type="nucleotide sequence ID" value="NM_024997.3"/>
</dbReference>
<dbReference type="RefSeq" id="XP_006721016.1">
    <molecule id="Q5U623-1"/>
    <property type="nucleotide sequence ID" value="XM_006720953.4"/>
</dbReference>
<dbReference type="RefSeq" id="XP_016879194.1">
    <property type="nucleotide sequence ID" value="XM_017023705.1"/>
</dbReference>
<dbReference type="RefSeq" id="XP_016879195.1">
    <property type="nucleotide sequence ID" value="XM_017023706.1"/>
</dbReference>
<dbReference type="RefSeq" id="XP_047290639.1">
    <molecule id="Q5U623-1"/>
    <property type="nucleotide sequence ID" value="XM_047434683.1"/>
</dbReference>
<dbReference type="RefSeq" id="XP_047290640.1">
    <molecule id="Q5U623-1"/>
    <property type="nucleotide sequence ID" value="XM_047434684.1"/>
</dbReference>
<dbReference type="RefSeq" id="XP_047290641.1">
    <molecule id="Q5U623-2"/>
    <property type="nucleotide sequence ID" value="XM_047434685.1"/>
</dbReference>
<dbReference type="BioGRID" id="123097">
    <property type="interactions" value="38"/>
</dbReference>
<dbReference type="CORUM" id="Q5U623"/>
<dbReference type="FunCoup" id="Q5U623">
    <property type="interactions" value="382"/>
</dbReference>
<dbReference type="IntAct" id="Q5U623">
    <property type="interactions" value="10"/>
</dbReference>
<dbReference type="STRING" id="9606.ENSP00000379808"/>
<dbReference type="GlyGen" id="Q5U623">
    <property type="glycosylation" value="2 sites, 1 N-linked glycan (1 site), 1 O-linked glycan (1 site)"/>
</dbReference>
<dbReference type="iPTMnet" id="Q5U623"/>
<dbReference type="PhosphoSitePlus" id="Q5U623"/>
<dbReference type="BioMuta" id="ATF7IP2"/>
<dbReference type="DMDM" id="143352739"/>
<dbReference type="jPOST" id="Q5U623"/>
<dbReference type="MassIVE" id="Q5U623"/>
<dbReference type="PaxDb" id="9606-ENSP00000379808"/>
<dbReference type="PeptideAtlas" id="Q5U623"/>
<dbReference type="ProteomicsDB" id="65237">
    <molecule id="Q5U623-1"/>
</dbReference>
<dbReference type="ProteomicsDB" id="65238">
    <molecule id="Q5U623-2"/>
</dbReference>
<dbReference type="Antibodypedia" id="52153">
    <property type="antibodies" value="82 antibodies from 16 providers"/>
</dbReference>
<dbReference type="DNASU" id="80063"/>
<dbReference type="Ensembl" id="ENST00000324570.9">
    <molecule id="Q5U623-2"/>
    <property type="protein sequence ID" value="ENSP00000322811.5"/>
    <property type="gene ID" value="ENSG00000166669.14"/>
</dbReference>
<dbReference type="Ensembl" id="ENST00000356427.2">
    <molecule id="Q5U623-1"/>
    <property type="protein sequence ID" value="ENSP00000348799.2"/>
    <property type="gene ID" value="ENSG00000166669.14"/>
</dbReference>
<dbReference type="Ensembl" id="ENST00000396559.5">
    <molecule id="Q5U623-2"/>
    <property type="protein sequence ID" value="ENSP00000379807.1"/>
    <property type="gene ID" value="ENSG00000166669.14"/>
</dbReference>
<dbReference type="Ensembl" id="ENST00000396560.6">
    <molecule id="Q5U623-1"/>
    <property type="protein sequence ID" value="ENSP00000379808.2"/>
    <property type="gene ID" value="ENSG00000166669.14"/>
</dbReference>
<dbReference type="Ensembl" id="ENST00000562102.6">
    <molecule id="Q5U623-1"/>
    <property type="protein sequence ID" value="ENSP00000457731.2"/>
    <property type="gene ID" value="ENSG00000166669.14"/>
</dbReference>
<dbReference type="GeneID" id="80063"/>
<dbReference type="KEGG" id="hsa:80063"/>
<dbReference type="MANE-Select" id="ENST00000562102.6">
    <property type="protein sequence ID" value="ENSP00000457731.2"/>
    <property type="RefSeq nucleotide sequence ID" value="NM_001393719.1"/>
    <property type="RefSeq protein sequence ID" value="NP_001380648.1"/>
</dbReference>
<dbReference type="UCSC" id="uc002czu.3">
    <molecule id="Q5U623-1"/>
    <property type="organism name" value="human"/>
</dbReference>
<dbReference type="AGR" id="HGNC:20397"/>
<dbReference type="CTD" id="80063"/>
<dbReference type="DisGeNET" id="80063"/>
<dbReference type="GeneCards" id="ATF7IP2"/>
<dbReference type="HGNC" id="HGNC:20397">
    <property type="gene designation" value="ATF7IP2"/>
</dbReference>
<dbReference type="HPA" id="ENSG00000166669">
    <property type="expression patterns" value="Tissue enhanced (testis)"/>
</dbReference>
<dbReference type="MIM" id="613645">
    <property type="type" value="gene"/>
</dbReference>
<dbReference type="neXtProt" id="NX_Q5U623"/>
<dbReference type="OpenTargets" id="ENSG00000166669"/>
<dbReference type="PharmGKB" id="PA134988230"/>
<dbReference type="VEuPathDB" id="HostDB:ENSG00000166669"/>
<dbReference type="eggNOG" id="ENOG502S2DM">
    <property type="taxonomic scope" value="Eukaryota"/>
</dbReference>
<dbReference type="GeneTree" id="ENSGT00530000063707"/>
<dbReference type="HOGENOM" id="CLU_025197_1_0_1"/>
<dbReference type="InParanoid" id="Q5U623"/>
<dbReference type="OMA" id="CHENPSN"/>
<dbReference type="OrthoDB" id="2434995at2759"/>
<dbReference type="PAN-GO" id="Q5U623">
    <property type="GO annotations" value="5 GO annotations based on evolutionary models"/>
</dbReference>
<dbReference type="PhylomeDB" id="Q5U623"/>
<dbReference type="TreeFam" id="TF329427"/>
<dbReference type="PathwayCommons" id="Q5U623"/>
<dbReference type="SignaLink" id="Q5U623"/>
<dbReference type="BioGRID-ORCS" id="80063">
    <property type="hits" value="15 hits in 1162 CRISPR screens"/>
</dbReference>
<dbReference type="ChiTaRS" id="ATF7IP2">
    <property type="organism name" value="human"/>
</dbReference>
<dbReference type="GenomeRNAi" id="80063"/>
<dbReference type="Pharos" id="Q5U623">
    <property type="development level" value="Tdark"/>
</dbReference>
<dbReference type="PRO" id="PR:Q5U623"/>
<dbReference type="Proteomes" id="UP000005640">
    <property type="component" value="Chromosome 16"/>
</dbReference>
<dbReference type="RNAct" id="Q5U623">
    <property type="molecule type" value="protein"/>
</dbReference>
<dbReference type="Bgee" id="ENSG00000166669">
    <property type="expression patterns" value="Expressed in right testis and 178 other cell types or tissues"/>
</dbReference>
<dbReference type="ExpressionAtlas" id="Q5U623">
    <property type="expression patterns" value="baseline and differential"/>
</dbReference>
<dbReference type="GO" id="GO:0005634">
    <property type="term" value="C:nucleus"/>
    <property type="evidence" value="ECO:0000318"/>
    <property type="project" value="GO_Central"/>
</dbReference>
<dbReference type="GO" id="GO:0005667">
    <property type="term" value="C:transcription regulator complex"/>
    <property type="evidence" value="ECO:0000318"/>
    <property type="project" value="GO_Central"/>
</dbReference>
<dbReference type="GO" id="GO:0003712">
    <property type="term" value="F:transcription coregulator activity"/>
    <property type="evidence" value="ECO:0000318"/>
    <property type="project" value="GO_Central"/>
</dbReference>
<dbReference type="GO" id="GO:0006355">
    <property type="term" value="P:regulation of DNA-templated transcription"/>
    <property type="evidence" value="ECO:0000318"/>
    <property type="project" value="GO_Central"/>
</dbReference>
<dbReference type="InterPro" id="IPR026085">
    <property type="entry name" value="ATF7-int"/>
</dbReference>
<dbReference type="InterPro" id="IPR031870">
    <property type="entry name" value="ATF7IP_BD"/>
</dbReference>
<dbReference type="InterPro" id="IPR056565">
    <property type="entry name" value="Fn3_ATF7IP"/>
</dbReference>
<dbReference type="InterPro" id="IPR003961">
    <property type="entry name" value="FN3_dom"/>
</dbReference>
<dbReference type="PANTHER" id="PTHR23210">
    <property type="entry name" value="ACTIVATING TRANSCRIPTION FACTOR 7 INTERACTING PROTEIN"/>
    <property type="match status" value="1"/>
</dbReference>
<dbReference type="PANTHER" id="PTHR23210:SF23">
    <property type="entry name" value="ACTIVATING TRANSCRIPTION FACTOR 7-INTERACTING PROTEIN 2"/>
    <property type="match status" value="1"/>
</dbReference>
<dbReference type="Pfam" id="PF16788">
    <property type="entry name" value="ATF7IP_BD"/>
    <property type="match status" value="1"/>
</dbReference>
<dbReference type="Pfam" id="PF16794">
    <property type="entry name" value="fn3_4"/>
    <property type="match status" value="1"/>
</dbReference>
<dbReference type="PROSITE" id="PS50853">
    <property type="entry name" value="FN3"/>
    <property type="match status" value="1"/>
</dbReference>
<reference key="1">
    <citation type="journal article" date="2005" name="J. Biol. Chem.">
        <title>Transcriptional repression and heterochromatin formation by MBD1 and MCAF/AM family proteins.</title>
        <authorList>
            <person name="Ichimura T."/>
            <person name="Watanabe S."/>
            <person name="Sakamoto Y."/>
            <person name="Aoto T."/>
            <person name="Fujita N."/>
            <person name="Nakao M."/>
        </authorList>
    </citation>
    <scope>NUCLEOTIDE SEQUENCE [MRNA] (ISOFORM 1)</scope>
</reference>
<reference key="2">
    <citation type="journal article" date="2004" name="Nat. Genet.">
        <title>Complete sequencing and characterization of 21,243 full-length human cDNAs.</title>
        <authorList>
            <person name="Ota T."/>
            <person name="Suzuki Y."/>
            <person name="Nishikawa T."/>
            <person name="Otsuki T."/>
            <person name="Sugiyama T."/>
            <person name="Irie R."/>
            <person name="Wakamatsu A."/>
            <person name="Hayashi K."/>
            <person name="Sato H."/>
            <person name="Nagai K."/>
            <person name="Kimura K."/>
            <person name="Makita H."/>
            <person name="Sekine M."/>
            <person name="Obayashi M."/>
            <person name="Nishi T."/>
            <person name="Shibahara T."/>
            <person name="Tanaka T."/>
            <person name="Ishii S."/>
            <person name="Yamamoto J."/>
            <person name="Saito K."/>
            <person name="Kawai Y."/>
            <person name="Isono Y."/>
            <person name="Nakamura Y."/>
            <person name="Nagahari K."/>
            <person name="Murakami K."/>
            <person name="Yasuda T."/>
            <person name="Iwayanagi T."/>
            <person name="Wagatsuma M."/>
            <person name="Shiratori A."/>
            <person name="Sudo H."/>
            <person name="Hosoiri T."/>
            <person name="Kaku Y."/>
            <person name="Kodaira H."/>
            <person name="Kondo H."/>
            <person name="Sugawara M."/>
            <person name="Takahashi M."/>
            <person name="Kanda K."/>
            <person name="Yokoi T."/>
            <person name="Furuya T."/>
            <person name="Kikkawa E."/>
            <person name="Omura Y."/>
            <person name="Abe K."/>
            <person name="Kamihara K."/>
            <person name="Katsuta N."/>
            <person name="Sato K."/>
            <person name="Tanikawa M."/>
            <person name="Yamazaki M."/>
            <person name="Ninomiya K."/>
            <person name="Ishibashi T."/>
            <person name="Yamashita H."/>
            <person name="Murakawa K."/>
            <person name="Fujimori K."/>
            <person name="Tanai H."/>
            <person name="Kimata M."/>
            <person name="Watanabe M."/>
            <person name="Hiraoka S."/>
            <person name="Chiba Y."/>
            <person name="Ishida S."/>
            <person name="Ono Y."/>
            <person name="Takiguchi S."/>
            <person name="Watanabe S."/>
            <person name="Yosida M."/>
            <person name="Hotuta T."/>
            <person name="Kusano J."/>
            <person name="Kanehori K."/>
            <person name="Takahashi-Fujii A."/>
            <person name="Hara H."/>
            <person name="Tanase T.-O."/>
            <person name="Nomura Y."/>
            <person name="Togiya S."/>
            <person name="Komai F."/>
            <person name="Hara R."/>
            <person name="Takeuchi K."/>
            <person name="Arita M."/>
            <person name="Imose N."/>
            <person name="Musashino K."/>
            <person name="Yuuki H."/>
            <person name="Oshima A."/>
            <person name="Sasaki N."/>
            <person name="Aotsuka S."/>
            <person name="Yoshikawa Y."/>
            <person name="Matsunawa H."/>
            <person name="Ichihara T."/>
            <person name="Shiohata N."/>
            <person name="Sano S."/>
            <person name="Moriya S."/>
            <person name="Momiyama H."/>
            <person name="Satoh N."/>
            <person name="Takami S."/>
            <person name="Terashima Y."/>
            <person name="Suzuki O."/>
            <person name="Nakagawa S."/>
            <person name="Senoh A."/>
            <person name="Mizoguchi H."/>
            <person name="Goto Y."/>
            <person name="Shimizu F."/>
            <person name="Wakebe H."/>
            <person name="Hishigaki H."/>
            <person name="Watanabe T."/>
            <person name="Sugiyama A."/>
            <person name="Takemoto M."/>
            <person name="Kawakami B."/>
            <person name="Yamazaki M."/>
            <person name="Watanabe K."/>
            <person name="Kumagai A."/>
            <person name="Itakura S."/>
            <person name="Fukuzumi Y."/>
            <person name="Fujimori Y."/>
            <person name="Komiyama M."/>
            <person name="Tashiro H."/>
            <person name="Tanigami A."/>
            <person name="Fujiwara T."/>
            <person name="Ono T."/>
            <person name="Yamada K."/>
            <person name="Fujii Y."/>
            <person name="Ozaki K."/>
            <person name="Hirao M."/>
            <person name="Ohmori Y."/>
            <person name="Kawabata A."/>
            <person name="Hikiji T."/>
            <person name="Kobatake N."/>
            <person name="Inagaki H."/>
            <person name="Ikema Y."/>
            <person name="Okamoto S."/>
            <person name="Okitani R."/>
            <person name="Kawakami T."/>
            <person name="Noguchi S."/>
            <person name="Itoh T."/>
            <person name="Shigeta K."/>
            <person name="Senba T."/>
            <person name="Matsumura K."/>
            <person name="Nakajima Y."/>
            <person name="Mizuno T."/>
            <person name="Morinaga M."/>
            <person name="Sasaki M."/>
            <person name="Togashi T."/>
            <person name="Oyama M."/>
            <person name="Hata H."/>
            <person name="Watanabe M."/>
            <person name="Komatsu T."/>
            <person name="Mizushima-Sugano J."/>
            <person name="Satoh T."/>
            <person name="Shirai Y."/>
            <person name="Takahashi Y."/>
            <person name="Nakagawa K."/>
            <person name="Okumura K."/>
            <person name="Nagase T."/>
            <person name="Nomura N."/>
            <person name="Kikuchi H."/>
            <person name="Masuho Y."/>
            <person name="Yamashita R."/>
            <person name="Nakai K."/>
            <person name="Yada T."/>
            <person name="Nakamura Y."/>
            <person name="Ohara O."/>
            <person name="Isogai T."/>
            <person name="Sugano S."/>
        </authorList>
    </citation>
    <scope>NUCLEOTIDE SEQUENCE [LARGE SCALE MRNA] (ISOFORM 2)</scope>
    <scope>NUCLEOTIDE SEQUENCE [LARGE SCALE MRNA] OF 339-682 (ISOFORM 1)</scope>
    <source>
        <tissue>Teratocarcinoma</tissue>
        <tissue>Testis</tissue>
    </source>
</reference>
<reference key="3">
    <citation type="journal article" date="2004" name="Genome Res.">
        <title>The status, quality, and expansion of the NIH full-length cDNA project: the Mammalian Gene Collection (MGC).</title>
        <authorList>
            <consortium name="The MGC Project Team"/>
        </authorList>
    </citation>
    <scope>NUCLEOTIDE SEQUENCE [LARGE SCALE MRNA] (ISOFORM 1)</scope>
    <source>
        <tissue>Lung</tissue>
        <tissue>Testis</tissue>
    </source>
</reference>
<reference key="4">
    <citation type="journal article" date="2007" name="BMC Genomics">
        <title>The full-ORF clone resource of the German cDNA consortium.</title>
        <authorList>
            <person name="Bechtel S."/>
            <person name="Rosenfelder H."/>
            <person name="Duda A."/>
            <person name="Schmidt C.P."/>
            <person name="Ernst U."/>
            <person name="Wellenreuther R."/>
            <person name="Mehrle A."/>
            <person name="Schuster C."/>
            <person name="Bahr A."/>
            <person name="Bloecker H."/>
            <person name="Heubner D."/>
            <person name="Hoerlein A."/>
            <person name="Michel G."/>
            <person name="Wedler H."/>
            <person name="Koehrer K."/>
            <person name="Ottenwaelder B."/>
            <person name="Poustka A."/>
            <person name="Wiemann S."/>
            <person name="Schupp I."/>
        </authorList>
    </citation>
    <scope>NUCLEOTIDE SEQUENCE [LARGE SCALE MRNA] OF 19-398 (ISOFORM 1)</scope>
    <source>
        <tissue>Stomach</tissue>
    </source>
</reference>
<reference key="5">
    <citation type="submission" date="2005-04" db="EMBL/GenBank/DDBJ databases">
        <authorList>
            <person name="Totoki Y."/>
            <person name="Toyoda A."/>
            <person name="Takeda T."/>
            <person name="Sakaki Y."/>
            <person name="Tanaka A."/>
            <person name="Yokoyama S."/>
        </authorList>
    </citation>
    <scope>NUCLEOTIDE SEQUENCE [LARGE SCALE MRNA] OF 324-681 (ISOFORM 1)</scope>
</reference>
<reference key="6">
    <citation type="journal article" date="2009" name="Anal. Chem.">
        <title>Lys-N and trypsin cover complementary parts of the phosphoproteome in a refined SCX-based approach.</title>
        <authorList>
            <person name="Gauci S."/>
            <person name="Helbig A.O."/>
            <person name="Slijper M."/>
            <person name="Krijgsveld J."/>
            <person name="Heck A.J."/>
            <person name="Mohammed S."/>
        </authorList>
    </citation>
    <scope>IDENTIFICATION BY MASS SPECTROMETRY [LARGE SCALE ANALYSIS]</scope>
</reference>
<reference key="7">
    <citation type="journal article" date="2013" name="J. Proteome Res.">
        <title>Toward a comprehensive characterization of a human cancer cell phosphoproteome.</title>
        <authorList>
            <person name="Zhou H."/>
            <person name="Di Palma S."/>
            <person name="Preisinger C."/>
            <person name="Peng M."/>
            <person name="Polat A.N."/>
            <person name="Heck A.J."/>
            <person name="Mohammed S."/>
        </authorList>
    </citation>
    <scope>PHOSPHORYLATION [LARGE SCALE ANALYSIS] AT SER-416; SER-488 AND SER-521</scope>
    <scope>IDENTIFICATION BY MASS SPECTROMETRY [LARGE SCALE ANALYSIS]</scope>
    <source>
        <tissue>Erythroleukemia</tissue>
    </source>
</reference>
<proteinExistence type="evidence at protein level"/>
<organism>
    <name type="scientific">Homo sapiens</name>
    <name type="common">Human</name>
    <dbReference type="NCBI Taxonomy" id="9606"/>
    <lineage>
        <taxon>Eukaryota</taxon>
        <taxon>Metazoa</taxon>
        <taxon>Chordata</taxon>
        <taxon>Craniata</taxon>
        <taxon>Vertebrata</taxon>
        <taxon>Euteleostomi</taxon>
        <taxon>Mammalia</taxon>
        <taxon>Eutheria</taxon>
        <taxon>Euarchontoglires</taxon>
        <taxon>Primates</taxon>
        <taxon>Haplorrhini</taxon>
        <taxon>Catarrhini</taxon>
        <taxon>Hominidae</taxon>
        <taxon>Homo</taxon>
    </lineage>
</organism>
<protein>
    <recommendedName>
        <fullName>Activating transcription factor 7-interacting protein 2</fullName>
        <shortName>ATF7-interacting protein 2</shortName>
    </recommendedName>
    <alternativeName>
        <fullName>MBD1-containing chromatin-associated factor 2</fullName>
    </alternativeName>
</protein>
<accession>Q5U623</accession>
<accession>B2RNR2</accession>
<accession>Q53EZ7</accession>
<accession>Q658U2</accession>
<accession>Q6IS97</accession>
<accession>Q8N9X8</accession>
<accession>Q9H9L6</accession>
<gene>
    <name type="primary">ATF7IP2</name>
    <name type="synonym">MCAF2</name>
</gene>
<evidence type="ECO:0000255" key="1"/>
<evidence type="ECO:0000255" key="2">
    <source>
        <dbReference type="PROSITE-ProRule" id="PRU00316"/>
    </source>
</evidence>
<evidence type="ECO:0000256" key="3">
    <source>
        <dbReference type="SAM" id="MobiDB-lite"/>
    </source>
</evidence>
<evidence type="ECO:0000303" key="4">
    <source>
    </source>
</evidence>
<evidence type="ECO:0000305" key="5"/>
<evidence type="ECO:0007744" key="6">
    <source>
    </source>
</evidence>